<name>VALA_ASPTE</name>
<sequence>MSLPAQSPIAVVGVAYRAPGIGRKGLYEFLAEGKSAFSPVPKERFEQGAYHHRNSEKAGVFSPEGAHFLPDDIYAFDAPFFNLNADEVRSMDPQHRMLLECAFEAAESAGITLAKLHGTKTGVFASLERCGYGEELLNDLPTSTKYTVFSTAGCMAANRLSYFFGLEGPSISLDSACSSSVYALHLACQSLRMAECSAAFVGAATLIINAKPIIALDTMGALSPDGKSYAYDSRRNGFGMGEGGGCLILKRLEDALEAGDPIQAVIRHTVCNHSGRTRGITMPSQLAQEDLLLRVHTEVGLKTGDTSVVEGHGTGTQVGDPIETRAIANIIAKDRADPVYIGSVKSNLGHLLSSSGMLAIVKAICMLQHATIFPNSGFKEMSPEIDALKLRVAKTCLPWQARGPRRVCTTNFGFGGSNAAVLLEEFQDKSLITGPGNGNKISHGPSRPPLQTKDGIDANGQSSKSYQRLFLLSAKSEKSLTRLLSSFALHLTKVPTSVAGDRYLADLSFTLNQRRTHFSHRIALVADSVEDLTQQLSTRSENRTGKAYPGQEVVPLFVFTGQGAQHSRMAAELDQYKPFAMAILRAERYLQEFGATWSLTKELFQCDGEKSRINEAEISQPACTAIQLGLVLLLRSWGISPAIAVGHSSGEIAAGYAAGALSFKTAMAIAFFRGKSTMECRRKNRSGLGGMVALGTDVETATRLVESTARVGRASIAAINSPSSVTISGDIAAVNRIAQIADVQGIFNRKLKLDVAYHSHHMEPATASYQAAIEPYCAAERTRSKSNGIITTDRASFFSSVTGCTESADVIQSASYWTENLVRPVKFSQAMQNILSQLGSDKRTVAAIIELGPHAALKGPINQILQSNIEIQSAYLPTLLRDYKNTETLLGLAGRMFTMGSSLNLAAVNNTTSKDARVLTDLPSYEWSKETRYIHEYPRSVQEKHPGHHYNPLLGWKIPSEGNDHIFRQVFTLDEMPWIRDHEVAGDAVFPFVGFVRQAVEAFKAIPKTTSEVSSVSLRELHIKRSLRVDNAGRVDMITKLRPAETGMGAFSSTIWVFEIMTWTESAGWTVHAHGRIGSEAVDFAAGGGPERTMAEEVLSMAQPTATDAEREYKILQESGISFGPRFRNMIALWAAPGIAVHETQPPRTDEDSFQGSHTFLELVTLDSMLHSAGIAIGQDDNNGGIRPVYVPVCSSRLQLSTIPVTAEHRFITVTRRLERDRKSGTSRINFVVFVITQSGRVPYLELDMTLQRITQLNNIVNLSREELPEGFYDTLVPHIGFADGKMLARHFADNNLVASGRHMRHQLANVSLHFLACALKTTTDVNRAMIPFHHQKFLHWAKELVADAVIPQVTPQLIEEVSKCSAVGELLRAVGEQIPQILRGQVQPLELMMKDGLLTRSYEDSITLHTCNKALAAYVSGLGEINPELRILEVGAGTGSATLPILEALSGGEATDNDSVPNFSSYHYTDISTGFFENARRKLSRWPQLTYQKLDIRHHPAEQGFKVGSYDLVIAVNVLHATPDLKATVQHVRALLKPGTGKLGIVEHTDNNDPTVLPFALLPDWWSVSDEFRQSRGGPLMSREHWNRLLVSAGFSGVEGAVESGEDSLFWTSMVEEHTDFLSDALDEVTIYGSLTDPSEIKLAESVARAMSGIPHLPIPRVKPLAELDDVQGSYSILLDNPQRSVLSTISSEDEFNKLKSVLLSSKGLLWVSPENRCPEYARIKGILRTLRLEESARKFLHVDGIPLDSIRGASAVAHLALALVRDKAPAAFREQEFVWHNDMLHVPRLRKLQEARETFALESGISICKEQPIWQSHGPENVLRLSIETPGDLDSIYFERHSLSRTALCDDEILIQVSAVGINFRDVLALLGRIPWSPPGREGTGTVMQVGANVSHLQAGDRVFFMVLEGALGTYVRTPGQFARKVPQSISTADAAGLVAAYVTALVCLDHVARIRQGESVLIHAASGAVGQACILLAQTRGADVFVTAGSAEKRQFLHETFEIPESHISSSRTLEFRHRVLKQTGGKGVDVVVNCLSGQLLQETWSMVTDFGRFVEIGKKDILENSHLSMGKFSCNVTFAAVDLTQYFHQRPEVLHSCLDEIVDMLEAKAIWPIQPVTPIPISDIQSGLRRLQSGHNIGKIVAILGPDERVKAERQSPLQKEKPLQADATYLITGGTGGIGRSLVPMLLDNGAANIVLLGRSGDSSRDVKRLIQQYSRPQCGIQVRAIACDVVSRVSLSTALHAVKDLPPVRGVIHGSLYLRDSLFMNATFEDWRKISGPKIDAAWHIHELLPGLDFFVALSSGIGIVGNVGQSIYGGSSTFLDAFAQYRARQHLHSVSISLPVIDDIGYVKEREGLRARLMEENVSFKLSIAQVLAAVKGAIIGRSSGLNKDSRAFLFVREDSVASQGWENRWHYLYPARRRNAAKVAGSGQDVDRSTPSGEEGRLEALCNKVSSITMIDREDVTPSRSLSEYGLDSLVAVELRHWIRREFGADLALTHIVGAESLQALSSRIVAQG</sequence>
<accession>P9WEV0</accession>
<evidence type="ECO:0000255" key="1"/>
<evidence type="ECO:0000255" key="2">
    <source>
        <dbReference type="PROSITE-ProRule" id="PRU00258"/>
    </source>
</evidence>
<evidence type="ECO:0000255" key="3">
    <source>
        <dbReference type="PROSITE-ProRule" id="PRU01348"/>
    </source>
</evidence>
<evidence type="ECO:0000255" key="4">
    <source>
        <dbReference type="PROSITE-ProRule" id="PRU01363"/>
    </source>
</evidence>
<evidence type="ECO:0000255" key="5">
    <source>
        <dbReference type="PROSITE-ProRule" id="PRU10022"/>
    </source>
</evidence>
<evidence type="ECO:0000256" key="6">
    <source>
        <dbReference type="SAM" id="MobiDB-lite"/>
    </source>
</evidence>
<evidence type="ECO:0000269" key="7">
    <source>
    </source>
</evidence>
<evidence type="ECO:0000303" key="8">
    <source>
    </source>
</evidence>
<evidence type="ECO:0000305" key="9">
    <source>
    </source>
</evidence>
<protein>
    <recommendedName>
        <fullName evidence="8">Highly reducing polyketide synthase valA</fullName>
        <shortName evidence="8">HR-PKS valA</shortName>
        <ecNumber evidence="9">2.3.1.-</ecNumber>
    </recommendedName>
    <alternativeName>
        <fullName evidence="8">Valactamide biosynthesis cluster protein A</fullName>
    </alternativeName>
</protein>
<feature type="chain" id="PRO_0000450619" description="Highly reducing polyketide synthase valA">
    <location>
        <begin position="1"/>
        <end position="2521"/>
    </location>
</feature>
<feature type="domain" description="Ketosynthase family 3 (KS3)" evidence="3 9">
    <location>
        <begin position="6"/>
        <end position="425"/>
    </location>
</feature>
<feature type="domain" description="PKS/mFAS DH" evidence="4">
    <location>
        <begin position="951"/>
        <end position="1260"/>
    </location>
</feature>
<feature type="domain" description="Carrier" evidence="2 9">
    <location>
        <begin position="2444"/>
        <end position="2521"/>
    </location>
</feature>
<feature type="region of interest" description="Disordered" evidence="6">
    <location>
        <begin position="435"/>
        <end position="454"/>
    </location>
</feature>
<feature type="region of interest" description="Malonyl-CoA:ACP transacylase (MAT) domain" evidence="1 9">
    <location>
        <begin position="558"/>
        <end position="883"/>
    </location>
</feature>
<feature type="region of interest" description="Dehydratase (DH) domain" evidence="1 9">
    <location>
        <begin position="951"/>
        <end position="1263"/>
    </location>
</feature>
<feature type="region of interest" description="N-terminal hotdog fold" evidence="4">
    <location>
        <begin position="951"/>
        <end position="1084"/>
    </location>
</feature>
<feature type="region of interest" description="C-terminal hotdog fold" evidence="4">
    <location>
        <begin position="1104"/>
        <end position="1260"/>
    </location>
</feature>
<feature type="region of interest" description="Methyltransferase (CMet) domain" evidence="1 9">
    <location>
        <begin position="1413"/>
        <end position="1610"/>
    </location>
</feature>
<feature type="region of interest" description="Enoylreductase (ER) domain" evidence="1 9">
    <location>
        <begin position="1833"/>
        <end position="2146"/>
    </location>
</feature>
<feature type="region of interest" description="Ketoreductase (KR) domain" evidence="1 9">
    <location>
        <begin position="2172"/>
        <end position="2348"/>
    </location>
</feature>
<feature type="active site" description="For beta-ketoacyl synthase activity" evidence="3">
    <location>
        <position position="177"/>
    </location>
</feature>
<feature type="active site" description="For beta-ketoacyl synthase activity" evidence="3">
    <location>
        <position position="312"/>
    </location>
</feature>
<feature type="active site" description="For beta-ketoacyl synthase activity" evidence="3">
    <location>
        <position position="350"/>
    </location>
</feature>
<feature type="active site" description="For malonyltransferase activity" evidence="5">
    <location>
        <position position="648"/>
    </location>
</feature>
<feature type="active site" description="Proton acceptor; for dehydratase activity" evidence="4">
    <location>
        <position position="982"/>
    </location>
</feature>
<feature type="active site" description="Proton donor; for dehydratase activity" evidence="4">
    <location>
        <position position="1167"/>
    </location>
</feature>
<feature type="modified residue" description="O-(pantetheine 4'-phosphoryl)serine" evidence="2">
    <location>
        <position position="2481"/>
    </location>
</feature>
<keyword id="KW-0012">Acyltransferase</keyword>
<keyword id="KW-0489">Methyltransferase</keyword>
<keyword id="KW-0511">Multifunctional enzyme</keyword>
<keyword id="KW-0521">NADP</keyword>
<keyword id="KW-0560">Oxidoreductase</keyword>
<keyword id="KW-0596">Phosphopantetheine</keyword>
<keyword id="KW-0597">Phosphoprotein</keyword>
<keyword id="KW-0949">S-adenosyl-L-methionine</keyword>
<keyword id="KW-0808">Transferase</keyword>
<comment type="function">
    <text evidence="7 9">Highly reducing polyketide synthase; part of the gene cluster that mediates the biosynthesis of valactamides (PubMed:28604695). The first step of the pathway is performed by the highly reducing polyketide synthase valA that produces the polyketide part of the final products (Probable). An acetyl starter unit is incorporated by the ketosynthase domain of valA, and subsequently 6 malonyl-CoA-derived ketide units are incorporated and fully reduced to their respective alkane forms by the action of the ketoreductase, dehydratase, and enoylreductase domains (except for the penultimate unit, which is reduced only to the alkene) (Probable). The final five ketide units are each proposed to be alpha-methylated by the methyltransferase domain before ketone reduction by the ketoreductase domain (Probable). The C1 domain of the nonribisomal peptide synthetase valB then catalyzes amide bond formation between the heptaketide chain and L-valine (L-Val) attached to the T1 domain (Probable). The C2 domain incorporating L-isoleucine (L-Ile) then carries out chain elongation, which is followed by macrolactonization by the Ct domain to release the final product (Probable).</text>
</comment>
<comment type="pathway">
    <text evidence="7">Secondary metabolite biosynthesis.</text>
</comment>
<comment type="domain">
    <text evidence="9">Multidomain protein; including a ketosynthase (KS) that catalyzes repeated decarboxylative condensation to elongate the polyketide backbone; a malonyl-CoA:ACP transacylase (MAT) that selects and transfers the extender unit malonyl-CoA; a dehydratase (DH) domain that reduces hydroxyl groups to enoyl groups; a methyltransferase (CMeT) domain responsible for the incorporation of methyl groups; an enoylreductase (ER) domain that reduces enoyl groups to alkyl group; a ketoreductase (KR) domain that catalyzes beta-ketoreduction steps; and an acyl-carrier protein (ACP) that serves as the tether of the growing and completed polyketide via its phosphopantetheinyl arm.</text>
</comment>
<comment type="disruption phenotype">
    <text evidence="7">Abolishes the production of valactamides A-H.</text>
</comment>
<dbReference type="EC" id="2.3.1.-" evidence="9"/>
<dbReference type="EMBL" id="KX449366">
    <property type="protein sequence ID" value="AQM58285.1"/>
    <property type="molecule type" value="Genomic_DNA"/>
</dbReference>
<dbReference type="SMR" id="P9WEV0"/>
<dbReference type="VEuPathDB" id="FungiDB:ATEG_03574"/>
<dbReference type="VEuPathDB" id="FungiDB:ATEG_03575"/>
<dbReference type="GO" id="GO:0004315">
    <property type="term" value="F:3-oxoacyl-[acyl-carrier-protein] synthase activity"/>
    <property type="evidence" value="ECO:0007669"/>
    <property type="project" value="InterPro"/>
</dbReference>
<dbReference type="GO" id="GO:0004312">
    <property type="term" value="F:fatty acid synthase activity"/>
    <property type="evidence" value="ECO:0007669"/>
    <property type="project" value="TreeGrafter"/>
</dbReference>
<dbReference type="GO" id="GO:0008168">
    <property type="term" value="F:methyltransferase activity"/>
    <property type="evidence" value="ECO:0007669"/>
    <property type="project" value="UniProtKB-KW"/>
</dbReference>
<dbReference type="GO" id="GO:0016491">
    <property type="term" value="F:oxidoreductase activity"/>
    <property type="evidence" value="ECO:0007669"/>
    <property type="project" value="UniProtKB-KW"/>
</dbReference>
<dbReference type="GO" id="GO:0031177">
    <property type="term" value="F:phosphopantetheine binding"/>
    <property type="evidence" value="ECO:0007669"/>
    <property type="project" value="InterPro"/>
</dbReference>
<dbReference type="GO" id="GO:0006633">
    <property type="term" value="P:fatty acid biosynthetic process"/>
    <property type="evidence" value="ECO:0007669"/>
    <property type="project" value="InterPro"/>
</dbReference>
<dbReference type="GO" id="GO:0032259">
    <property type="term" value="P:methylation"/>
    <property type="evidence" value="ECO:0007669"/>
    <property type="project" value="UniProtKB-KW"/>
</dbReference>
<dbReference type="GO" id="GO:0030639">
    <property type="term" value="P:polyketide biosynthetic process"/>
    <property type="evidence" value="ECO:0007669"/>
    <property type="project" value="UniProtKB-ARBA"/>
</dbReference>
<dbReference type="CDD" id="cd02440">
    <property type="entry name" value="AdoMet_MTases"/>
    <property type="match status" value="1"/>
</dbReference>
<dbReference type="CDD" id="cd05195">
    <property type="entry name" value="enoyl_red"/>
    <property type="match status" value="1"/>
</dbReference>
<dbReference type="CDD" id="cd00833">
    <property type="entry name" value="PKS"/>
    <property type="match status" value="1"/>
</dbReference>
<dbReference type="FunFam" id="3.40.50.720:FF:000209">
    <property type="entry name" value="Polyketide synthase Pks12"/>
    <property type="match status" value="1"/>
</dbReference>
<dbReference type="Gene3D" id="3.30.70.3290">
    <property type="match status" value="1"/>
</dbReference>
<dbReference type="Gene3D" id="3.40.47.10">
    <property type="match status" value="1"/>
</dbReference>
<dbReference type="Gene3D" id="1.10.1200.10">
    <property type="entry name" value="ACP-like"/>
    <property type="match status" value="1"/>
</dbReference>
<dbReference type="Gene3D" id="3.40.366.10">
    <property type="entry name" value="Malonyl-Coenzyme A Acyl Carrier Protein, domain 2"/>
    <property type="match status" value="1"/>
</dbReference>
<dbReference type="Gene3D" id="3.90.180.10">
    <property type="entry name" value="Medium-chain alcohol dehydrogenases, catalytic domain"/>
    <property type="match status" value="1"/>
</dbReference>
<dbReference type="Gene3D" id="3.40.50.720">
    <property type="entry name" value="NAD(P)-binding Rossmann-like Domain"/>
    <property type="match status" value="2"/>
</dbReference>
<dbReference type="Gene3D" id="3.10.129.110">
    <property type="entry name" value="Polyketide synthase dehydratase"/>
    <property type="match status" value="1"/>
</dbReference>
<dbReference type="Gene3D" id="3.40.50.150">
    <property type="entry name" value="Vaccinia Virus protein VP39"/>
    <property type="match status" value="1"/>
</dbReference>
<dbReference type="InterPro" id="IPR001227">
    <property type="entry name" value="Ac_transferase_dom_sf"/>
</dbReference>
<dbReference type="InterPro" id="IPR036736">
    <property type="entry name" value="ACP-like_sf"/>
</dbReference>
<dbReference type="InterPro" id="IPR014043">
    <property type="entry name" value="Acyl_transferase_dom"/>
</dbReference>
<dbReference type="InterPro" id="IPR016035">
    <property type="entry name" value="Acyl_Trfase/lysoPLipase"/>
</dbReference>
<dbReference type="InterPro" id="IPR013154">
    <property type="entry name" value="ADH-like_N"/>
</dbReference>
<dbReference type="InterPro" id="IPR011032">
    <property type="entry name" value="GroES-like_sf"/>
</dbReference>
<dbReference type="InterPro" id="IPR018201">
    <property type="entry name" value="Ketoacyl_synth_AS"/>
</dbReference>
<dbReference type="InterPro" id="IPR014031">
    <property type="entry name" value="Ketoacyl_synth_C"/>
</dbReference>
<dbReference type="InterPro" id="IPR014030">
    <property type="entry name" value="Ketoacyl_synth_N"/>
</dbReference>
<dbReference type="InterPro" id="IPR016036">
    <property type="entry name" value="Malonyl_transacylase_ACP-bd"/>
</dbReference>
<dbReference type="InterPro" id="IPR013217">
    <property type="entry name" value="Methyltransf_12"/>
</dbReference>
<dbReference type="InterPro" id="IPR036291">
    <property type="entry name" value="NAD(P)-bd_dom_sf"/>
</dbReference>
<dbReference type="InterPro" id="IPR056501">
    <property type="entry name" value="NAD-bd_HRPKS_sdrA"/>
</dbReference>
<dbReference type="InterPro" id="IPR020841">
    <property type="entry name" value="PKS_Beta-ketoAc_synthase_dom"/>
</dbReference>
<dbReference type="InterPro" id="IPR042104">
    <property type="entry name" value="PKS_dehydratase_sf"/>
</dbReference>
<dbReference type="InterPro" id="IPR020807">
    <property type="entry name" value="PKS_DH"/>
</dbReference>
<dbReference type="InterPro" id="IPR049551">
    <property type="entry name" value="PKS_DH_C"/>
</dbReference>
<dbReference type="InterPro" id="IPR049552">
    <property type="entry name" value="PKS_DH_N"/>
</dbReference>
<dbReference type="InterPro" id="IPR020843">
    <property type="entry name" value="PKS_ER"/>
</dbReference>
<dbReference type="InterPro" id="IPR013968">
    <property type="entry name" value="PKS_KR"/>
</dbReference>
<dbReference type="InterPro" id="IPR049900">
    <property type="entry name" value="PKS_mFAS_DH"/>
</dbReference>
<dbReference type="InterPro" id="IPR050091">
    <property type="entry name" value="PKS_NRPS_Biosynth_Enz"/>
</dbReference>
<dbReference type="InterPro" id="IPR020806">
    <property type="entry name" value="PKS_PP-bd"/>
</dbReference>
<dbReference type="InterPro" id="IPR009081">
    <property type="entry name" value="PP-bd_ACP"/>
</dbReference>
<dbReference type="InterPro" id="IPR006162">
    <property type="entry name" value="Ppantetheine_attach_site"/>
</dbReference>
<dbReference type="InterPro" id="IPR029063">
    <property type="entry name" value="SAM-dependent_MTases_sf"/>
</dbReference>
<dbReference type="InterPro" id="IPR016039">
    <property type="entry name" value="Thiolase-like"/>
</dbReference>
<dbReference type="PANTHER" id="PTHR43775:SF29">
    <property type="entry name" value="ASPERFURANONE POLYKETIDE SYNTHASE AFOG-RELATED"/>
    <property type="match status" value="1"/>
</dbReference>
<dbReference type="PANTHER" id="PTHR43775">
    <property type="entry name" value="FATTY ACID SYNTHASE"/>
    <property type="match status" value="1"/>
</dbReference>
<dbReference type="Pfam" id="PF00698">
    <property type="entry name" value="Acyl_transf_1"/>
    <property type="match status" value="1"/>
</dbReference>
<dbReference type="Pfam" id="PF08240">
    <property type="entry name" value="ADH_N"/>
    <property type="match status" value="1"/>
</dbReference>
<dbReference type="Pfam" id="PF13602">
    <property type="entry name" value="ADH_zinc_N_2"/>
    <property type="match status" value="1"/>
</dbReference>
<dbReference type="Pfam" id="PF22621">
    <property type="entry name" value="CurL-like_PKS_C"/>
    <property type="match status" value="1"/>
</dbReference>
<dbReference type="Pfam" id="PF00109">
    <property type="entry name" value="ketoacyl-synt"/>
    <property type="match status" value="1"/>
</dbReference>
<dbReference type="Pfam" id="PF02801">
    <property type="entry name" value="Ketoacyl-synt_C"/>
    <property type="match status" value="1"/>
</dbReference>
<dbReference type="Pfam" id="PF08659">
    <property type="entry name" value="KR"/>
    <property type="match status" value="1"/>
</dbReference>
<dbReference type="Pfam" id="PF08242">
    <property type="entry name" value="Methyltransf_12"/>
    <property type="match status" value="1"/>
</dbReference>
<dbReference type="Pfam" id="PF23114">
    <property type="entry name" value="NAD-bd_HRPKS_sdrA"/>
    <property type="match status" value="1"/>
</dbReference>
<dbReference type="Pfam" id="PF21089">
    <property type="entry name" value="PKS_DH_N"/>
    <property type="match status" value="1"/>
</dbReference>
<dbReference type="Pfam" id="PF00550">
    <property type="entry name" value="PP-binding"/>
    <property type="match status" value="1"/>
</dbReference>
<dbReference type="Pfam" id="PF14765">
    <property type="entry name" value="PS-DH"/>
    <property type="match status" value="1"/>
</dbReference>
<dbReference type="SMART" id="SM00827">
    <property type="entry name" value="PKS_AT"/>
    <property type="match status" value="1"/>
</dbReference>
<dbReference type="SMART" id="SM00826">
    <property type="entry name" value="PKS_DH"/>
    <property type="match status" value="1"/>
</dbReference>
<dbReference type="SMART" id="SM00829">
    <property type="entry name" value="PKS_ER"/>
    <property type="match status" value="1"/>
</dbReference>
<dbReference type="SMART" id="SM00822">
    <property type="entry name" value="PKS_KR"/>
    <property type="match status" value="1"/>
</dbReference>
<dbReference type="SMART" id="SM00825">
    <property type="entry name" value="PKS_KS"/>
    <property type="match status" value="1"/>
</dbReference>
<dbReference type="SMART" id="SM00823">
    <property type="entry name" value="PKS_PP"/>
    <property type="match status" value="1"/>
</dbReference>
<dbReference type="SUPFAM" id="SSF47336">
    <property type="entry name" value="ACP-like"/>
    <property type="match status" value="1"/>
</dbReference>
<dbReference type="SUPFAM" id="SSF52151">
    <property type="entry name" value="FabD/lysophospholipase-like"/>
    <property type="match status" value="1"/>
</dbReference>
<dbReference type="SUPFAM" id="SSF50129">
    <property type="entry name" value="GroES-like"/>
    <property type="match status" value="1"/>
</dbReference>
<dbReference type="SUPFAM" id="SSF51735">
    <property type="entry name" value="NAD(P)-binding Rossmann-fold domains"/>
    <property type="match status" value="2"/>
</dbReference>
<dbReference type="SUPFAM" id="SSF55048">
    <property type="entry name" value="Probable ACP-binding domain of malonyl-CoA ACP transacylase"/>
    <property type="match status" value="1"/>
</dbReference>
<dbReference type="SUPFAM" id="SSF53335">
    <property type="entry name" value="S-adenosyl-L-methionine-dependent methyltransferases"/>
    <property type="match status" value="1"/>
</dbReference>
<dbReference type="SUPFAM" id="SSF53901">
    <property type="entry name" value="Thiolase-like"/>
    <property type="match status" value="1"/>
</dbReference>
<dbReference type="PROSITE" id="PS50075">
    <property type="entry name" value="CARRIER"/>
    <property type="match status" value="1"/>
</dbReference>
<dbReference type="PROSITE" id="PS00606">
    <property type="entry name" value="KS3_1"/>
    <property type="match status" value="1"/>
</dbReference>
<dbReference type="PROSITE" id="PS52004">
    <property type="entry name" value="KS3_2"/>
    <property type="match status" value="1"/>
</dbReference>
<dbReference type="PROSITE" id="PS00012">
    <property type="entry name" value="PHOSPHOPANTETHEINE"/>
    <property type="match status" value="1"/>
</dbReference>
<dbReference type="PROSITE" id="PS52019">
    <property type="entry name" value="PKS_MFAS_DH"/>
    <property type="match status" value="1"/>
</dbReference>
<proteinExistence type="inferred from homology"/>
<gene>
    <name evidence="8" type="primary">valA</name>
</gene>
<reference key="1">
    <citation type="journal article" date="2017" name="Nat. Chem. Biol.">
        <title>A scalable platform to identify fungal secondary metabolites and their gene clusters.</title>
        <authorList>
            <person name="Clevenger K.D."/>
            <person name="Bok J.W."/>
            <person name="Ye R."/>
            <person name="Miley G.P."/>
            <person name="Verdan M.H."/>
            <person name="Velk T."/>
            <person name="Chen C."/>
            <person name="Yang K."/>
            <person name="Robey M.T."/>
            <person name="Gao P."/>
            <person name="Lamprecht M."/>
            <person name="Thomas P.M."/>
            <person name="Islam M.N."/>
            <person name="Palmer J.M."/>
            <person name="Wu C.C."/>
            <person name="Keller N.P."/>
            <person name="Kelleher N.L."/>
        </authorList>
    </citation>
    <scope>NUCLEOTIDE SEQUENCE [GENOMIC DNA]</scope>
    <scope>FUNCTION</scope>
    <scope>DOMAIN</scope>
    <scope>DISRUPTION PHENOTYPE</scope>
    <scope>PATHWAY</scope>
    <source>
        <strain>ATCC 20542 / MF4845</strain>
    </source>
</reference>
<organism>
    <name type="scientific">Aspergillus terreus</name>
    <dbReference type="NCBI Taxonomy" id="33178"/>
    <lineage>
        <taxon>Eukaryota</taxon>
        <taxon>Fungi</taxon>
        <taxon>Dikarya</taxon>
        <taxon>Ascomycota</taxon>
        <taxon>Pezizomycotina</taxon>
        <taxon>Eurotiomycetes</taxon>
        <taxon>Eurotiomycetidae</taxon>
        <taxon>Eurotiales</taxon>
        <taxon>Aspergillaceae</taxon>
        <taxon>Aspergillus</taxon>
        <taxon>Aspergillus subgen. Circumdati</taxon>
    </lineage>
</organism>